<organism>
    <name type="scientific">Macaca fascicularis</name>
    <name type="common">Crab-eating macaque</name>
    <name type="synonym">Cynomolgus monkey</name>
    <dbReference type="NCBI Taxonomy" id="9541"/>
    <lineage>
        <taxon>Eukaryota</taxon>
        <taxon>Metazoa</taxon>
        <taxon>Chordata</taxon>
        <taxon>Craniata</taxon>
        <taxon>Vertebrata</taxon>
        <taxon>Euteleostomi</taxon>
        <taxon>Mammalia</taxon>
        <taxon>Eutheria</taxon>
        <taxon>Euarchontoglires</taxon>
        <taxon>Primates</taxon>
        <taxon>Haplorrhini</taxon>
        <taxon>Catarrhini</taxon>
        <taxon>Cercopithecidae</taxon>
        <taxon>Cercopithecinae</taxon>
        <taxon>Macaca</taxon>
    </lineage>
</organism>
<comment type="function">
    <text evidence="1">May play a role in tumorigenesis.</text>
</comment>
<comment type="alternative products">
    <event type="alternative splicing"/>
    <isoform>
        <id>Q95J40-1</id>
        <name>1</name>
        <sequence type="displayed"/>
    </isoform>
    <isoform>
        <id>Q95J40-2</id>
        <name>2</name>
        <sequence type="described" ref="VSP_058372 VSP_058373 VSP_058374"/>
    </isoform>
</comment>
<comment type="miscellaneous">
    <molecule>Isoform 2</molecule>
    <text evidence="4">May be produced at very low levels due to a premature stop codon in the mRNA, leading to nonsense-mediated mRNA decay.</text>
</comment>
<comment type="sequence caution" evidence="4">
    <conflict type="erroneous translation">
        <sequence resource="EMBL-CDS" id="BAB63006"/>
    </conflict>
    <text>Wrong choice of frame.</text>
</comment>
<comment type="sequence caution" evidence="4">
    <conflict type="erroneous translation">
        <sequence resource="EMBL-CDS" id="BAB63036"/>
    </conflict>
    <text>Wrong choice of frame.</text>
</comment>
<comment type="sequence caution" evidence="4">
    <conflict type="erroneous translation">
        <sequence resource="EMBL-CDS" id="BAB84025"/>
    </conflict>
    <text>Erroneous CDS prediction.</text>
</comment>
<protein>
    <recommendedName>
        <fullName>Coiled-coil domain-containing protein 7</fullName>
    </recommendedName>
</protein>
<feature type="chain" id="PRO_0000089400" description="Coiled-coil domain-containing protein 7">
    <location>
        <begin position="1"/>
        <end position="1394"/>
    </location>
</feature>
<feature type="region of interest" description="Disordered" evidence="3">
    <location>
        <begin position="345"/>
        <end position="375"/>
    </location>
</feature>
<feature type="region of interest" description="Disordered" evidence="3">
    <location>
        <begin position="431"/>
        <end position="617"/>
    </location>
</feature>
<feature type="region of interest" description="Disordered" evidence="3">
    <location>
        <begin position="634"/>
        <end position="806"/>
    </location>
</feature>
<feature type="region of interest" description="Disordered" evidence="3">
    <location>
        <begin position="819"/>
        <end position="842"/>
    </location>
</feature>
<feature type="coiled-coil region" evidence="2">
    <location>
        <begin position="308"/>
        <end position="340"/>
    </location>
</feature>
<feature type="coiled-coil region" evidence="2">
    <location>
        <begin position="383"/>
        <end position="421"/>
    </location>
</feature>
<feature type="compositionally biased region" description="Basic residues" evidence="3">
    <location>
        <begin position="349"/>
        <end position="362"/>
    </location>
</feature>
<feature type="compositionally biased region" description="Basic and acidic residues" evidence="3">
    <location>
        <begin position="363"/>
        <end position="375"/>
    </location>
</feature>
<feature type="compositionally biased region" description="Polar residues" evidence="3">
    <location>
        <begin position="437"/>
        <end position="446"/>
    </location>
</feature>
<feature type="compositionally biased region" description="Basic and acidic residues" evidence="3">
    <location>
        <begin position="447"/>
        <end position="462"/>
    </location>
</feature>
<feature type="compositionally biased region" description="Polar residues" evidence="3">
    <location>
        <begin position="464"/>
        <end position="473"/>
    </location>
</feature>
<feature type="compositionally biased region" description="Basic and acidic residues" evidence="3">
    <location>
        <begin position="491"/>
        <end position="500"/>
    </location>
</feature>
<feature type="compositionally biased region" description="Polar residues" evidence="3">
    <location>
        <begin position="503"/>
        <end position="513"/>
    </location>
</feature>
<feature type="compositionally biased region" description="Polar residues" evidence="3">
    <location>
        <begin position="521"/>
        <end position="538"/>
    </location>
</feature>
<feature type="compositionally biased region" description="Polar residues" evidence="3">
    <location>
        <begin position="546"/>
        <end position="571"/>
    </location>
</feature>
<feature type="compositionally biased region" description="Basic and acidic residues" evidence="3">
    <location>
        <begin position="583"/>
        <end position="600"/>
    </location>
</feature>
<feature type="compositionally biased region" description="Polar residues" evidence="3">
    <location>
        <begin position="663"/>
        <end position="679"/>
    </location>
</feature>
<feature type="compositionally biased region" description="Basic and acidic residues" evidence="3">
    <location>
        <begin position="695"/>
        <end position="707"/>
    </location>
</feature>
<feature type="compositionally biased region" description="Polar residues" evidence="3">
    <location>
        <begin position="711"/>
        <end position="721"/>
    </location>
</feature>
<feature type="compositionally biased region" description="Basic and acidic residues" evidence="3">
    <location>
        <begin position="722"/>
        <end position="736"/>
    </location>
</feature>
<feature type="compositionally biased region" description="Polar residues" evidence="3">
    <location>
        <begin position="780"/>
        <end position="790"/>
    </location>
</feature>
<feature type="compositionally biased region" description="Basic and acidic residues" evidence="3">
    <location>
        <begin position="791"/>
        <end position="806"/>
    </location>
</feature>
<feature type="compositionally biased region" description="Basic and acidic residues" evidence="3">
    <location>
        <begin position="830"/>
        <end position="842"/>
    </location>
</feature>
<feature type="splice variant" id="VSP_058372" description="In isoform 2.">
    <original>VCILHYFFFCPSFVFL</original>
    <variation>ILESLF</variation>
    <location>
        <begin position="153"/>
        <end position="168"/>
    </location>
</feature>
<feature type="splice variant" id="VSP_058373" description="In isoform 2.">
    <original>ISKDQTLLQA</original>
    <variation>SLQNLAKQSL</variation>
    <location>
        <begin position="181"/>
        <end position="190"/>
    </location>
</feature>
<feature type="splice variant" id="VSP_058374" description="In isoform 2.">
    <location>
        <begin position="191"/>
        <end position="1394"/>
    </location>
</feature>
<feature type="sequence conflict" description="In Ref. 2; BAB63006/BAB63036." evidence="4" ref="2">
    <original>I</original>
    <variation>V</variation>
    <location>
        <position position="87"/>
    </location>
</feature>
<name>CCDC7_MACFA</name>
<sequence length="1394" mass="158239">MKPVKHLLTTSNKSATLPALTSKKGLHNLPLSPKLKEKHNAKLIHDKIEPMVLRSPPTGESIVRYALPIPSSKTKNLLPGDEMIGKIIKHLKMVVSTLEETYGHCDQNGEEPFVKRENEELSLSIGDDMNSFLTCCSQFATQLETALKEEQNVCILHYFFFCPSFVFLKWFQWQVNQMEEISKDQTLLQAEPPEPDKTVTLSIAQIVRLLQRFEELKNRLKQRSKSSWKVMLSKTMDEENRPEAVKSCEAVAQKIEEFIEAHSTDEFKGVSATEPQTAHSMTNRFNTMLKVFENQANMLERAVNDQVLLDAEYKQIQRDFELLSEEKLVLENELQKLKDTEKIKSTNNRTKKAAKTVKKKDKGKSEDSEKKMSSEKEFKIKDLDQVQKVARLEIENKVLQEQLKQALQEAEKAKHQLNYFLSQERKLLKSEGKTETTMRVGNSQTEVKGEDSKTIPLEKETGKSLVSDSGGQKTSDKIQEYPQITAQSGRLIEKSSEKKRSSPAISDLSQILKSQDESAFLESSNEVSVAENQSNKSPSETRDESLTTVSSSKEVQDSLSVGTLAQKNETVMSPFILPPVLTESKKADVSEEQLQKKTEEQTYQAPEKSQAYSEVPDENLMVENKDSVTKVQVEQMKQTTSSMERREATLTTPQSPEDVVLVSRSQSETKNLEATGNESFHSHNDVPEENLMLEQDTKSKTEVEVKKQKSFQDNQLNTHNEVPNERLIVEHQESMSKTKLQVKKQETSTEQPLTTHDKEPDENLTLGHQDSMSKSEMQVKEQSTLKGQRITTHEEEPGKNLALEHQDSLSKLEMQIKKNEKLPREKRHSTHGEESSENPMLKHQDAVSKIQVQLEKQETSEGGRSIPDKNSMFVHQDSVSKLQMQEKKKVTPGRERRNTHIVVPNENVVSVHQDSKSKLQMQEKKQINPGVEKHKTFPFEIQKKDISLEHLLPEEKVLLSRRESQTKKLQAKVTSRKITNEAASELPNTAENLPAVYPSISDLIIRLDLNKVVETDIESLRGALGRRLLNDEFKTQPKSFPGSEIEQLTDAFGRDILKDEFKTRSKSLPETDERLRRATERGTINNAMKTQLKRKSHPETGLKHLKGVNEKDIIKDLINIQSKRHAETDKEHLADAIGRGIIKGSINAQLKGHQETDKNFFAYAIGRGVRKESIKTQLKSHPETDKEFLADAIGRGIIIGPIIRQLKSHQETDKQLLKDAIGRDIIKGPINAQLKSHQETDVEPLTNAIGSSKTIGEIKTQLRTHYDVNLFKNKDMSIQRQEGIFNRSITPSKFPTKVINLSPFENKEETYEYSSPYAIAPSKAVYRTYRASSSFSKDIHLPLLNQLHSGHSKVVTLNQKTIEFTLPSVTNTIGKPAYKVLHAAARKSVPHPYF</sequence>
<reference key="1">
    <citation type="journal article" date="2011" name="Nat. Biotechnol.">
        <title>Genome sequencing and comparison of two nonhuman primate animal models, the cynomolgus and Chinese rhesus macaques.</title>
        <authorList>
            <person name="Yan G."/>
            <person name="Zhang G."/>
            <person name="Fang X."/>
            <person name="Zhang Y."/>
            <person name="Li C."/>
            <person name="Ling F."/>
            <person name="Cooper D.N."/>
            <person name="Li Q."/>
            <person name="Li Y."/>
            <person name="van Gool A.J."/>
            <person name="Du H."/>
            <person name="Chen J."/>
            <person name="Chen R."/>
            <person name="Zhang P."/>
            <person name="Huang Z."/>
            <person name="Thompson J.R."/>
            <person name="Meng Y."/>
            <person name="Bai Y."/>
            <person name="Wang J."/>
            <person name="Zhuo M."/>
            <person name="Wang T."/>
            <person name="Huang Y."/>
            <person name="Wei L."/>
            <person name="Li J."/>
            <person name="Wang Z."/>
            <person name="Hu H."/>
            <person name="Yang P."/>
            <person name="Le L."/>
            <person name="Stenson P.D."/>
            <person name="Li B."/>
            <person name="Liu X."/>
            <person name="Ball E.V."/>
            <person name="An N."/>
            <person name="Huang Q."/>
            <person name="Zhang Y."/>
            <person name="Fan W."/>
            <person name="Zhang X."/>
            <person name="Li Y."/>
            <person name="Wang W."/>
            <person name="Katze M.G."/>
            <person name="Su B."/>
            <person name="Nielsen R."/>
            <person name="Yang H."/>
            <person name="Wang J."/>
            <person name="Wang X."/>
            <person name="Wang J."/>
        </authorList>
    </citation>
    <scope>NUCLEOTIDE SEQUENCE [LARGE SCALE GENOMIC DNA]</scope>
</reference>
<reference key="2">
    <citation type="journal article" date="2002" name="BMC Genomics">
        <title>Cynomolgus monkey testicular cDNAs for discovery of novel human genes in the human genome sequence.</title>
        <authorList>
            <person name="Osada N."/>
            <person name="Hida M."/>
            <person name="Kusuda J."/>
            <person name="Tanuma R."/>
            <person name="Hirata M."/>
            <person name="Suto Y."/>
            <person name="Hirai M."/>
            <person name="Terao K."/>
            <person name="Sugano S."/>
            <person name="Hashimoto K."/>
        </authorList>
    </citation>
    <scope>NUCLEOTIDE SEQUENCE [LARGE SCALE MRNA] (ISOFORM 2)</scope>
    <source>
        <tissue>Testis</tissue>
    </source>
</reference>
<gene>
    <name type="primary">CCDC7</name>
    <name type="ORF">QtsA-13406</name>
    <name type="ORF">QtsA-13472</name>
</gene>
<dbReference type="EMBL" id="AQIA01070568">
    <property type="status" value="NOT_ANNOTATED_CDS"/>
    <property type="molecule type" value="Genomic_DNA"/>
</dbReference>
<dbReference type="EMBL" id="AQIA01070569">
    <property type="status" value="NOT_ANNOTATED_CDS"/>
    <property type="molecule type" value="Genomic_DNA"/>
</dbReference>
<dbReference type="EMBL" id="AQIA01070570">
    <property type="status" value="NOT_ANNOTATED_CDS"/>
    <property type="molecule type" value="Genomic_DNA"/>
</dbReference>
<dbReference type="EMBL" id="AQIA01070571">
    <property type="status" value="NOT_ANNOTATED_CDS"/>
    <property type="molecule type" value="Genomic_DNA"/>
</dbReference>
<dbReference type="EMBL" id="AQIA01070572">
    <property type="status" value="NOT_ANNOTATED_CDS"/>
    <property type="molecule type" value="Genomic_DNA"/>
</dbReference>
<dbReference type="EMBL" id="AQIA01070573">
    <property type="status" value="NOT_ANNOTATED_CDS"/>
    <property type="molecule type" value="Genomic_DNA"/>
</dbReference>
<dbReference type="EMBL" id="AQIA01070574">
    <property type="status" value="NOT_ANNOTATED_CDS"/>
    <property type="molecule type" value="Genomic_DNA"/>
</dbReference>
<dbReference type="EMBL" id="AQIA01070575">
    <property type="status" value="NOT_ANNOTATED_CDS"/>
    <property type="molecule type" value="Genomic_DNA"/>
</dbReference>
<dbReference type="EMBL" id="AB066550">
    <property type="protein sequence ID" value="BAB84025.1"/>
    <property type="status" value="ALT_SEQ"/>
    <property type="molecule type" value="mRNA"/>
</dbReference>
<dbReference type="EMBL" id="AB070061">
    <property type="protein sequence ID" value="BAB63006.1"/>
    <property type="status" value="ALT_SEQ"/>
    <property type="molecule type" value="mRNA"/>
</dbReference>
<dbReference type="EMBL" id="AB070091">
    <property type="protein sequence ID" value="BAB63036.1"/>
    <property type="status" value="ALT_SEQ"/>
    <property type="molecule type" value="mRNA"/>
</dbReference>
<dbReference type="SMR" id="Q95J40"/>
<dbReference type="STRING" id="9541.ENSMFAP00000023327"/>
<dbReference type="eggNOG" id="ENOG502S48H">
    <property type="taxonomic scope" value="Eukaryota"/>
</dbReference>
<dbReference type="Proteomes" id="UP000233100">
    <property type="component" value="Unplaced"/>
</dbReference>
<dbReference type="InterPro" id="IPR029272">
    <property type="entry name" value="CCDC7"/>
</dbReference>
<dbReference type="PANTHER" id="PTHR22035">
    <property type="entry name" value="COILED-COIL DOMAIN-CONTAINING PROTEIN 7"/>
    <property type="match status" value="1"/>
</dbReference>
<dbReference type="PANTHER" id="PTHR22035:SF4">
    <property type="entry name" value="COILED-COIL DOMAIN-CONTAINING PROTEIN 7"/>
    <property type="match status" value="1"/>
</dbReference>
<dbReference type="Pfam" id="PF15368">
    <property type="entry name" value="BioT2"/>
    <property type="match status" value="1"/>
</dbReference>
<accession>Q95J40</accession>
<accession>Q8WNU5</accession>
<evidence type="ECO:0000250" key="1">
    <source>
        <dbReference type="UniProtKB" id="Q9D541"/>
    </source>
</evidence>
<evidence type="ECO:0000255" key="2"/>
<evidence type="ECO:0000256" key="3">
    <source>
        <dbReference type="SAM" id="MobiDB-lite"/>
    </source>
</evidence>
<evidence type="ECO:0000305" key="4"/>
<keyword id="KW-0025">Alternative splicing</keyword>
<keyword id="KW-0175">Coiled coil</keyword>
<keyword id="KW-1185">Reference proteome</keyword>
<proteinExistence type="evidence at transcript level"/>